<name>TSAD_XYLF2</name>
<keyword id="KW-0012">Acyltransferase</keyword>
<keyword id="KW-0963">Cytoplasm</keyword>
<keyword id="KW-0408">Iron</keyword>
<keyword id="KW-0479">Metal-binding</keyword>
<keyword id="KW-0808">Transferase</keyword>
<keyword id="KW-0819">tRNA processing</keyword>
<comment type="function">
    <text evidence="1">Required for the formation of a threonylcarbamoyl group on adenosine at position 37 (t(6)A37) in tRNAs that read codons beginning with adenine. Is involved in the transfer of the threonylcarbamoyl moiety of threonylcarbamoyl-AMP (TC-AMP) to the N6 group of A37, together with TsaE and TsaB. TsaD likely plays a direct catalytic role in this reaction.</text>
</comment>
<comment type="catalytic activity">
    <reaction evidence="1">
        <text>L-threonylcarbamoyladenylate + adenosine(37) in tRNA = N(6)-L-threonylcarbamoyladenosine(37) in tRNA + AMP + H(+)</text>
        <dbReference type="Rhea" id="RHEA:37059"/>
        <dbReference type="Rhea" id="RHEA-COMP:10162"/>
        <dbReference type="Rhea" id="RHEA-COMP:10163"/>
        <dbReference type="ChEBI" id="CHEBI:15378"/>
        <dbReference type="ChEBI" id="CHEBI:73682"/>
        <dbReference type="ChEBI" id="CHEBI:74411"/>
        <dbReference type="ChEBI" id="CHEBI:74418"/>
        <dbReference type="ChEBI" id="CHEBI:456215"/>
        <dbReference type="EC" id="2.3.1.234"/>
    </reaction>
</comment>
<comment type="cofactor">
    <cofactor evidence="1">
        <name>Fe(2+)</name>
        <dbReference type="ChEBI" id="CHEBI:29033"/>
    </cofactor>
    <text evidence="1">Binds 1 Fe(2+) ion per subunit.</text>
</comment>
<comment type="subcellular location">
    <subcellularLocation>
        <location evidence="1">Cytoplasm</location>
    </subcellularLocation>
</comment>
<comment type="similarity">
    <text evidence="1">Belongs to the KAE1 / TsaD family.</text>
</comment>
<protein>
    <recommendedName>
        <fullName evidence="1">tRNA N6-adenosine threonylcarbamoyltransferase</fullName>
        <ecNumber evidence="1">2.3.1.234</ecNumber>
    </recommendedName>
    <alternativeName>
        <fullName evidence="1">N6-L-threonylcarbamoyladenine synthase</fullName>
        <shortName evidence="1">t(6)A synthase</shortName>
    </alternativeName>
    <alternativeName>
        <fullName evidence="1">t(6)A37 threonylcarbamoyladenosine biosynthesis protein TsaD</fullName>
    </alternativeName>
    <alternativeName>
        <fullName evidence="1">tRNA threonylcarbamoyladenosine biosynthesis protein TsaD</fullName>
    </alternativeName>
</protein>
<organism>
    <name type="scientific">Xylella fastidiosa (strain M23)</name>
    <dbReference type="NCBI Taxonomy" id="405441"/>
    <lineage>
        <taxon>Bacteria</taxon>
        <taxon>Pseudomonadati</taxon>
        <taxon>Pseudomonadota</taxon>
        <taxon>Gammaproteobacteria</taxon>
        <taxon>Lysobacterales</taxon>
        <taxon>Lysobacteraceae</taxon>
        <taxon>Xylella</taxon>
    </lineage>
</organism>
<proteinExistence type="inferred from homology"/>
<accession>B2I7X4</accession>
<sequence length="348" mass="36752">MKIIGIESSCDETGVAVYDTALSGSAALRAHSVYSQVALHAEYGGVVPELASRDHVRKLLPLLRQTLAEAKLSVEELDGVAYTAGPGLVGALLVGAGVARALAWALEVPAIGVHHMEGHLLSPLLEDDPPEVPFVALLVSGGHTQLVAVDAIGDYRLLGETLDDAAGEAFDKVAKLMGLPYPGGPQLAALAERGIPGRFCFTRPMVDRPGLDFSFSGLKTQVLLAWRNSDQSDAIRVDVARGFEDAVVDTLAIKCERALDTVACQTLVVAGGVGANKCLRARLQAMCRQRGGRACFPRPALCTDNGAMIAFAGALRLQAGQQSDVAVRVTPRWDMAALPPLVSRSCRR</sequence>
<gene>
    <name evidence="1" type="primary">tsaD</name>
    <name type="synonym">gcp</name>
    <name type="ordered locus">XfasM23_1735</name>
</gene>
<feature type="chain" id="PRO_1000146044" description="tRNA N6-adenosine threonylcarbamoyltransferase">
    <location>
        <begin position="1"/>
        <end position="348"/>
    </location>
</feature>
<feature type="binding site" evidence="1">
    <location>
        <position position="115"/>
    </location>
    <ligand>
        <name>Fe cation</name>
        <dbReference type="ChEBI" id="CHEBI:24875"/>
    </ligand>
</feature>
<feature type="binding site" evidence="1">
    <location>
        <position position="119"/>
    </location>
    <ligand>
        <name>Fe cation</name>
        <dbReference type="ChEBI" id="CHEBI:24875"/>
    </ligand>
</feature>
<feature type="binding site" evidence="1">
    <location>
        <begin position="138"/>
        <end position="142"/>
    </location>
    <ligand>
        <name>substrate</name>
    </ligand>
</feature>
<feature type="binding site" evidence="1">
    <location>
        <position position="171"/>
    </location>
    <ligand>
        <name>substrate</name>
    </ligand>
</feature>
<feature type="binding site" evidence="1">
    <location>
        <position position="184"/>
    </location>
    <ligand>
        <name>substrate</name>
    </ligand>
</feature>
<feature type="binding site" evidence="1">
    <location>
        <position position="276"/>
    </location>
    <ligand>
        <name>substrate</name>
    </ligand>
</feature>
<feature type="binding site" evidence="1">
    <location>
        <position position="304"/>
    </location>
    <ligand>
        <name>Fe cation</name>
        <dbReference type="ChEBI" id="CHEBI:24875"/>
    </ligand>
</feature>
<dbReference type="EC" id="2.3.1.234" evidence="1"/>
<dbReference type="EMBL" id="CP001011">
    <property type="protein sequence ID" value="ACB93139.1"/>
    <property type="molecule type" value="Genomic_DNA"/>
</dbReference>
<dbReference type="RefSeq" id="WP_004083595.1">
    <property type="nucleotide sequence ID" value="NC_010577.1"/>
</dbReference>
<dbReference type="SMR" id="B2I7X4"/>
<dbReference type="GeneID" id="93905477"/>
<dbReference type="KEGG" id="xfn:XfasM23_1735"/>
<dbReference type="HOGENOM" id="CLU_023208_0_0_6"/>
<dbReference type="Proteomes" id="UP000001698">
    <property type="component" value="Chromosome"/>
</dbReference>
<dbReference type="GO" id="GO:0005737">
    <property type="term" value="C:cytoplasm"/>
    <property type="evidence" value="ECO:0007669"/>
    <property type="project" value="UniProtKB-SubCell"/>
</dbReference>
<dbReference type="GO" id="GO:0005506">
    <property type="term" value="F:iron ion binding"/>
    <property type="evidence" value="ECO:0007669"/>
    <property type="project" value="UniProtKB-UniRule"/>
</dbReference>
<dbReference type="GO" id="GO:0061711">
    <property type="term" value="F:N(6)-L-threonylcarbamoyladenine synthase activity"/>
    <property type="evidence" value="ECO:0007669"/>
    <property type="project" value="UniProtKB-EC"/>
</dbReference>
<dbReference type="GO" id="GO:0002949">
    <property type="term" value="P:tRNA threonylcarbamoyladenosine modification"/>
    <property type="evidence" value="ECO:0007669"/>
    <property type="project" value="UniProtKB-UniRule"/>
</dbReference>
<dbReference type="CDD" id="cd24133">
    <property type="entry name" value="ASKHA_NBD_TsaD_bac"/>
    <property type="match status" value="1"/>
</dbReference>
<dbReference type="FunFam" id="3.30.420.40:FF:000040">
    <property type="entry name" value="tRNA N6-adenosine threonylcarbamoyltransferase"/>
    <property type="match status" value="1"/>
</dbReference>
<dbReference type="Gene3D" id="3.30.420.40">
    <property type="match status" value="2"/>
</dbReference>
<dbReference type="HAMAP" id="MF_01445">
    <property type="entry name" value="TsaD"/>
    <property type="match status" value="1"/>
</dbReference>
<dbReference type="InterPro" id="IPR043129">
    <property type="entry name" value="ATPase_NBD"/>
</dbReference>
<dbReference type="InterPro" id="IPR000905">
    <property type="entry name" value="Gcp-like_dom"/>
</dbReference>
<dbReference type="InterPro" id="IPR017861">
    <property type="entry name" value="KAE1/TsaD"/>
</dbReference>
<dbReference type="InterPro" id="IPR022450">
    <property type="entry name" value="TsaD"/>
</dbReference>
<dbReference type="NCBIfam" id="TIGR00329">
    <property type="entry name" value="gcp_kae1"/>
    <property type="match status" value="1"/>
</dbReference>
<dbReference type="NCBIfam" id="TIGR03723">
    <property type="entry name" value="T6A_TsaD_YgjD"/>
    <property type="match status" value="1"/>
</dbReference>
<dbReference type="PANTHER" id="PTHR11735">
    <property type="entry name" value="TRNA N6-ADENOSINE THREONYLCARBAMOYLTRANSFERASE"/>
    <property type="match status" value="1"/>
</dbReference>
<dbReference type="PANTHER" id="PTHR11735:SF6">
    <property type="entry name" value="TRNA N6-ADENOSINE THREONYLCARBAMOYLTRANSFERASE, MITOCHONDRIAL"/>
    <property type="match status" value="1"/>
</dbReference>
<dbReference type="Pfam" id="PF00814">
    <property type="entry name" value="TsaD"/>
    <property type="match status" value="1"/>
</dbReference>
<dbReference type="PRINTS" id="PR00789">
    <property type="entry name" value="OSIALOPTASE"/>
</dbReference>
<dbReference type="SUPFAM" id="SSF53067">
    <property type="entry name" value="Actin-like ATPase domain"/>
    <property type="match status" value="2"/>
</dbReference>
<evidence type="ECO:0000255" key="1">
    <source>
        <dbReference type="HAMAP-Rule" id="MF_01445"/>
    </source>
</evidence>
<reference key="1">
    <citation type="journal article" date="2010" name="J. Bacteriol.">
        <title>Whole genome sequences of two Xylella fastidiosa strains (M12 and M23) causing almond leaf scorch disease in California.</title>
        <authorList>
            <person name="Chen J."/>
            <person name="Xie G."/>
            <person name="Han S."/>
            <person name="Chertkov O."/>
            <person name="Sims D."/>
            <person name="Civerolo E.L."/>
        </authorList>
    </citation>
    <scope>NUCLEOTIDE SEQUENCE [LARGE SCALE GENOMIC DNA]</scope>
    <source>
        <strain>M23</strain>
    </source>
</reference>